<keyword id="KW-1185">Reference proteome</keyword>
<keyword id="KW-0687">Ribonucleoprotein</keyword>
<keyword id="KW-0689">Ribosomal protein</keyword>
<feature type="chain" id="PRO_1000144080" description="Large ribosomal subunit protein uL13">
    <location>
        <begin position="1"/>
        <end position="142"/>
    </location>
</feature>
<comment type="function">
    <text evidence="1">This protein is one of the early assembly proteins of the 50S ribosomal subunit, although it is not seen to bind rRNA by itself. It is important during the early stages of 50S assembly.</text>
</comment>
<comment type="subunit">
    <text evidence="1">Part of the 50S ribosomal subunit.</text>
</comment>
<comment type="similarity">
    <text evidence="1">Belongs to the universal ribosomal protein uL13 family.</text>
</comment>
<organism>
    <name type="scientific">Acidithiobacillus ferrooxidans (strain ATCC 23270 / DSM 14882 / CIP 104768 / NCIMB 8455)</name>
    <name type="common">Ferrobacillus ferrooxidans (strain ATCC 23270)</name>
    <dbReference type="NCBI Taxonomy" id="243159"/>
    <lineage>
        <taxon>Bacteria</taxon>
        <taxon>Pseudomonadati</taxon>
        <taxon>Pseudomonadota</taxon>
        <taxon>Acidithiobacillia</taxon>
        <taxon>Acidithiobacillales</taxon>
        <taxon>Acidithiobacillaceae</taxon>
        <taxon>Acidithiobacillus</taxon>
    </lineage>
</organism>
<accession>B7JAI4</accession>
<protein>
    <recommendedName>
        <fullName evidence="1">Large ribosomal subunit protein uL13</fullName>
    </recommendedName>
    <alternativeName>
        <fullName evidence="2">50S ribosomal protein L13</fullName>
    </alternativeName>
</protein>
<sequence>MKTYSAKSHEVQGDWFVVDATDKVLGRLSVELAKRLRGKHKPEYTPHADTGDYIVVINADKIAVTGNKAKDKIYYHHTGYVGNLKSASFEKMKETHPERIIELAVKGMLPKNPLGRAMFKKLKVYTGSEHPHSAQQPQPLNV</sequence>
<reference key="1">
    <citation type="journal article" date="2008" name="BMC Genomics">
        <title>Acidithiobacillus ferrooxidans metabolism: from genome sequence to industrial applications.</title>
        <authorList>
            <person name="Valdes J."/>
            <person name="Pedroso I."/>
            <person name="Quatrini R."/>
            <person name="Dodson R.J."/>
            <person name="Tettelin H."/>
            <person name="Blake R. II"/>
            <person name="Eisen J.A."/>
            <person name="Holmes D.S."/>
        </authorList>
    </citation>
    <scope>NUCLEOTIDE SEQUENCE [LARGE SCALE GENOMIC DNA]</scope>
    <source>
        <strain>ATCC 23270 / DSM 14882 / CIP 104768 / NCIMB 8455</strain>
    </source>
</reference>
<proteinExistence type="inferred from homology"/>
<name>RL13_ACIF2</name>
<gene>
    <name evidence="1" type="primary">rplM</name>
    <name type="ordered locus">AFE_3075</name>
</gene>
<evidence type="ECO:0000255" key="1">
    <source>
        <dbReference type="HAMAP-Rule" id="MF_01366"/>
    </source>
</evidence>
<evidence type="ECO:0000305" key="2"/>
<dbReference type="EMBL" id="CP001219">
    <property type="protein sequence ID" value="ACK78499.1"/>
    <property type="molecule type" value="Genomic_DNA"/>
</dbReference>
<dbReference type="RefSeq" id="WP_009567386.1">
    <property type="nucleotide sequence ID" value="NC_011761.1"/>
</dbReference>
<dbReference type="SMR" id="B7JAI4"/>
<dbReference type="STRING" id="243159.AFE_3075"/>
<dbReference type="PaxDb" id="243159-AFE_3075"/>
<dbReference type="GeneID" id="65282074"/>
<dbReference type="KEGG" id="afr:AFE_3075"/>
<dbReference type="eggNOG" id="COG0102">
    <property type="taxonomic scope" value="Bacteria"/>
</dbReference>
<dbReference type="HOGENOM" id="CLU_082184_2_2_6"/>
<dbReference type="Proteomes" id="UP000001362">
    <property type="component" value="Chromosome"/>
</dbReference>
<dbReference type="GO" id="GO:0022625">
    <property type="term" value="C:cytosolic large ribosomal subunit"/>
    <property type="evidence" value="ECO:0007669"/>
    <property type="project" value="TreeGrafter"/>
</dbReference>
<dbReference type="GO" id="GO:0003729">
    <property type="term" value="F:mRNA binding"/>
    <property type="evidence" value="ECO:0007669"/>
    <property type="project" value="TreeGrafter"/>
</dbReference>
<dbReference type="GO" id="GO:0003735">
    <property type="term" value="F:structural constituent of ribosome"/>
    <property type="evidence" value="ECO:0007669"/>
    <property type="project" value="InterPro"/>
</dbReference>
<dbReference type="GO" id="GO:0017148">
    <property type="term" value="P:negative regulation of translation"/>
    <property type="evidence" value="ECO:0007669"/>
    <property type="project" value="TreeGrafter"/>
</dbReference>
<dbReference type="GO" id="GO:0006412">
    <property type="term" value="P:translation"/>
    <property type="evidence" value="ECO:0007669"/>
    <property type="project" value="UniProtKB-UniRule"/>
</dbReference>
<dbReference type="CDD" id="cd00392">
    <property type="entry name" value="Ribosomal_L13"/>
    <property type="match status" value="1"/>
</dbReference>
<dbReference type="FunFam" id="3.90.1180.10:FF:000001">
    <property type="entry name" value="50S ribosomal protein L13"/>
    <property type="match status" value="1"/>
</dbReference>
<dbReference type="Gene3D" id="3.90.1180.10">
    <property type="entry name" value="Ribosomal protein L13"/>
    <property type="match status" value="1"/>
</dbReference>
<dbReference type="HAMAP" id="MF_01366">
    <property type="entry name" value="Ribosomal_uL13"/>
    <property type="match status" value="1"/>
</dbReference>
<dbReference type="InterPro" id="IPR005822">
    <property type="entry name" value="Ribosomal_uL13"/>
</dbReference>
<dbReference type="InterPro" id="IPR005823">
    <property type="entry name" value="Ribosomal_uL13_bac-type"/>
</dbReference>
<dbReference type="InterPro" id="IPR023563">
    <property type="entry name" value="Ribosomal_uL13_CS"/>
</dbReference>
<dbReference type="InterPro" id="IPR036899">
    <property type="entry name" value="Ribosomal_uL13_sf"/>
</dbReference>
<dbReference type="NCBIfam" id="TIGR01066">
    <property type="entry name" value="rplM_bact"/>
    <property type="match status" value="1"/>
</dbReference>
<dbReference type="PANTHER" id="PTHR11545:SF2">
    <property type="entry name" value="LARGE RIBOSOMAL SUBUNIT PROTEIN UL13M"/>
    <property type="match status" value="1"/>
</dbReference>
<dbReference type="PANTHER" id="PTHR11545">
    <property type="entry name" value="RIBOSOMAL PROTEIN L13"/>
    <property type="match status" value="1"/>
</dbReference>
<dbReference type="Pfam" id="PF00572">
    <property type="entry name" value="Ribosomal_L13"/>
    <property type="match status" value="1"/>
</dbReference>
<dbReference type="PIRSF" id="PIRSF002181">
    <property type="entry name" value="Ribosomal_L13"/>
    <property type="match status" value="1"/>
</dbReference>
<dbReference type="SUPFAM" id="SSF52161">
    <property type="entry name" value="Ribosomal protein L13"/>
    <property type="match status" value="1"/>
</dbReference>
<dbReference type="PROSITE" id="PS00783">
    <property type="entry name" value="RIBOSOMAL_L13"/>
    <property type="match status" value="1"/>
</dbReference>